<reference key="1">
    <citation type="journal article" date="2004" name="Proc. Natl. Acad. Sci. U.S.A.">
        <title>Complete genomes of two clinical Staphylococcus aureus strains: evidence for the rapid evolution of virulence and drug resistance.</title>
        <authorList>
            <person name="Holden M.T.G."/>
            <person name="Feil E.J."/>
            <person name="Lindsay J.A."/>
            <person name="Peacock S.J."/>
            <person name="Day N.P.J."/>
            <person name="Enright M.C."/>
            <person name="Foster T.J."/>
            <person name="Moore C.E."/>
            <person name="Hurst L."/>
            <person name="Atkin R."/>
            <person name="Barron A."/>
            <person name="Bason N."/>
            <person name="Bentley S.D."/>
            <person name="Chillingworth C."/>
            <person name="Chillingworth T."/>
            <person name="Churcher C."/>
            <person name="Clark L."/>
            <person name="Corton C."/>
            <person name="Cronin A."/>
            <person name="Doggett J."/>
            <person name="Dowd L."/>
            <person name="Feltwell T."/>
            <person name="Hance Z."/>
            <person name="Harris B."/>
            <person name="Hauser H."/>
            <person name="Holroyd S."/>
            <person name="Jagels K."/>
            <person name="James K.D."/>
            <person name="Lennard N."/>
            <person name="Line A."/>
            <person name="Mayes R."/>
            <person name="Moule S."/>
            <person name="Mungall K."/>
            <person name="Ormond D."/>
            <person name="Quail M.A."/>
            <person name="Rabbinowitsch E."/>
            <person name="Rutherford K.M."/>
            <person name="Sanders M."/>
            <person name="Sharp S."/>
            <person name="Simmonds M."/>
            <person name="Stevens K."/>
            <person name="Whitehead S."/>
            <person name="Barrell B.G."/>
            <person name="Spratt B.G."/>
            <person name="Parkhill J."/>
        </authorList>
    </citation>
    <scope>NUCLEOTIDE SEQUENCE [LARGE SCALE GENOMIC DNA]</scope>
    <source>
        <strain>MRSA252</strain>
    </source>
</reference>
<proteinExistence type="inferred from homology"/>
<sequence>MAFKLPNLPYAYDALEPYIDQRTMEFHHDKHHNTYVTKLNATVEGTELEHQSLADMIANLDKVPEAMRMSVRNNGGGHFNHSLFWEILSPNSEEKGGVIDDIKAQWGTLDEFKNEFANKATTLFGSGWTWLVVNDGKLEIVTTPNQDNPLTEGKTPILLFDVWEHAYYLKYQNKRPDYMTAFWNIVNWKKVDELYQAAK</sequence>
<keyword id="KW-0408">Iron</keyword>
<keyword id="KW-0464">Manganese</keyword>
<keyword id="KW-0479">Metal-binding</keyword>
<keyword id="KW-0560">Oxidoreductase</keyword>
<keyword id="KW-0346">Stress response</keyword>
<evidence type="ECO:0000250" key="1"/>
<evidence type="ECO:0000250" key="2">
    <source>
        <dbReference type="UniProtKB" id="P80293"/>
    </source>
</evidence>
<evidence type="ECO:0000305" key="3"/>
<gene>
    <name type="primary">sodM</name>
    <name type="ordered locus">SAR0135</name>
</gene>
<feature type="chain" id="PRO_0000160082" description="Superoxide dismutase [Mn/Fe] 2">
    <location>
        <begin position="1"/>
        <end position="199"/>
    </location>
</feature>
<feature type="binding site" evidence="2">
    <location>
        <position position="27"/>
    </location>
    <ligand>
        <name>Fe(3+)</name>
        <dbReference type="ChEBI" id="CHEBI:29034"/>
    </ligand>
</feature>
<feature type="binding site" evidence="2">
    <location>
        <position position="27"/>
    </location>
    <ligand>
        <name>Mn(2+)</name>
        <dbReference type="ChEBI" id="CHEBI:29035"/>
    </ligand>
</feature>
<feature type="binding site" evidence="2">
    <location>
        <position position="81"/>
    </location>
    <ligand>
        <name>Fe(3+)</name>
        <dbReference type="ChEBI" id="CHEBI:29034"/>
    </ligand>
</feature>
<feature type="binding site" evidence="2">
    <location>
        <position position="81"/>
    </location>
    <ligand>
        <name>Mn(2+)</name>
        <dbReference type="ChEBI" id="CHEBI:29035"/>
    </ligand>
</feature>
<feature type="binding site" evidence="2">
    <location>
        <position position="161"/>
    </location>
    <ligand>
        <name>Fe(3+)</name>
        <dbReference type="ChEBI" id="CHEBI:29034"/>
    </ligand>
</feature>
<feature type="binding site" evidence="2">
    <location>
        <position position="161"/>
    </location>
    <ligand>
        <name>Mn(2+)</name>
        <dbReference type="ChEBI" id="CHEBI:29035"/>
    </ligand>
</feature>
<feature type="binding site" evidence="2">
    <location>
        <position position="165"/>
    </location>
    <ligand>
        <name>Fe(3+)</name>
        <dbReference type="ChEBI" id="CHEBI:29034"/>
    </ligand>
</feature>
<feature type="binding site" evidence="2">
    <location>
        <position position="165"/>
    </location>
    <ligand>
        <name>Mn(2+)</name>
        <dbReference type="ChEBI" id="CHEBI:29035"/>
    </ligand>
</feature>
<dbReference type="EC" id="1.15.1.1" evidence="2"/>
<dbReference type="EMBL" id="BX571856">
    <property type="protein sequence ID" value="CAG39162.1"/>
    <property type="molecule type" value="Genomic_DNA"/>
</dbReference>
<dbReference type="RefSeq" id="WP_000874681.1">
    <property type="nucleotide sequence ID" value="NC_002952.2"/>
</dbReference>
<dbReference type="SMR" id="Q6GKH2"/>
<dbReference type="KEGG" id="sar:SAR0135"/>
<dbReference type="HOGENOM" id="CLU_031625_0_0_9"/>
<dbReference type="Proteomes" id="UP000000596">
    <property type="component" value="Chromosome"/>
</dbReference>
<dbReference type="GO" id="GO:0005737">
    <property type="term" value="C:cytoplasm"/>
    <property type="evidence" value="ECO:0007669"/>
    <property type="project" value="TreeGrafter"/>
</dbReference>
<dbReference type="GO" id="GO:0046872">
    <property type="term" value="F:metal ion binding"/>
    <property type="evidence" value="ECO:0007669"/>
    <property type="project" value="UniProtKB-KW"/>
</dbReference>
<dbReference type="GO" id="GO:0004784">
    <property type="term" value="F:superoxide dismutase activity"/>
    <property type="evidence" value="ECO:0007669"/>
    <property type="project" value="UniProtKB-EC"/>
</dbReference>
<dbReference type="FunFam" id="1.10.287.990:FF:000001">
    <property type="entry name" value="Superoxide dismutase"/>
    <property type="match status" value="1"/>
</dbReference>
<dbReference type="FunFam" id="3.55.40.20:FF:000001">
    <property type="entry name" value="Superoxide dismutase"/>
    <property type="match status" value="1"/>
</dbReference>
<dbReference type="Gene3D" id="1.10.287.990">
    <property type="entry name" value="Fe,Mn superoxide dismutase (SOD) domain"/>
    <property type="match status" value="1"/>
</dbReference>
<dbReference type="Gene3D" id="3.55.40.20">
    <property type="entry name" value="Iron/manganese superoxide dismutase, C-terminal domain"/>
    <property type="match status" value="1"/>
</dbReference>
<dbReference type="InterPro" id="IPR001189">
    <property type="entry name" value="Mn/Fe_SOD"/>
</dbReference>
<dbReference type="InterPro" id="IPR019833">
    <property type="entry name" value="Mn/Fe_SOD_BS"/>
</dbReference>
<dbReference type="InterPro" id="IPR019832">
    <property type="entry name" value="Mn/Fe_SOD_C"/>
</dbReference>
<dbReference type="InterPro" id="IPR019831">
    <property type="entry name" value="Mn/Fe_SOD_N"/>
</dbReference>
<dbReference type="InterPro" id="IPR036324">
    <property type="entry name" value="Mn/Fe_SOD_N_sf"/>
</dbReference>
<dbReference type="InterPro" id="IPR036314">
    <property type="entry name" value="SOD_C_sf"/>
</dbReference>
<dbReference type="PANTHER" id="PTHR43595">
    <property type="entry name" value="37S RIBOSOMAL PROTEIN S26, MITOCHONDRIAL"/>
    <property type="match status" value="1"/>
</dbReference>
<dbReference type="PANTHER" id="PTHR43595:SF2">
    <property type="entry name" value="SMALL RIBOSOMAL SUBUNIT PROTEIN MS42"/>
    <property type="match status" value="1"/>
</dbReference>
<dbReference type="Pfam" id="PF02777">
    <property type="entry name" value="Sod_Fe_C"/>
    <property type="match status" value="1"/>
</dbReference>
<dbReference type="Pfam" id="PF00081">
    <property type="entry name" value="Sod_Fe_N"/>
    <property type="match status" value="1"/>
</dbReference>
<dbReference type="PIRSF" id="PIRSF000349">
    <property type="entry name" value="SODismutase"/>
    <property type="match status" value="1"/>
</dbReference>
<dbReference type="PRINTS" id="PR01703">
    <property type="entry name" value="MNSODISMTASE"/>
</dbReference>
<dbReference type="SUPFAM" id="SSF54719">
    <property type="entry name" value="Fe,Mn superoxide dismutase (SOD), C-terminal domain"/>
    <property type="match status" value="1"/>
</dbReference>
<dbReference type="SUPFAM" id="SSF46609">
    <property type="entry name" value="Fe,Mn superoxide dismutase (SOD), N-terminal domain"/>
    <property type="match status" value="1"/>
</dbReference>
<dbReference type="PROSITE" id="PS00088">
    <property type="entry name" value="SOD_MN"/>
    <property type="match status" value="1"/>
</dbReference>
<comment type="function">
    <text evidence="2">Destroys superoxide anion radicals which are normally produced within the cells and which are toxic to biological systems. Catalyzes the dismutation of superoxide anion radicals into O2 and H2O2 by successive reduction and oxidation of the transition metal ion at the active site.</text>
</comment>
<comment type="catalytic activity">
    <reaction evidence="2">
        <text>2 superoxide + 2 H(+) = H2O2 + O2</text>
        <dbReference type="Rhea" id="RHEA:20696"/>
        <dbReference type="ChEBI" id="CHEBI:15378"/>
        <dbReference type="ChEBI" id="CHEBI:15379"/>
        <dbReference type="ChEBI" id="CHEBI:16240"/>
        <dbReference type="ChEBI" id="CHEBI:18421"/>
        <dbReference type="EC" id="1.15.1.1"/>
    </reaction>
    <physiologicalReaction direction="left-to-right" evidence="2">
        <dbReference type="Rhea" id="RHEA:20697"/>
    </physiologicalReaction>
</comment>
<comment type="cofactor">
    <cofactor evidence="2">
        <name>Mn(2+)</name>
        <dbReference type="ChEBI" id="CHEBI:29035"/>
    </cofactor>
    <cofactor evidence="2">
        <name>Fe(3+)</name>
        <dbReference type="ChEBI" id="CHEBI:29034"/>
    </cofactor>
    <text evidence="2">Binds 1 Mn(2+) or Fe(3+) ion per subunit.</text>
</comment>
<comment type="subunit">
    <text evidence="1">Homodimer. Can also form a heterodimer with SodA (By similarity).</text>
</comment>
<comment type="similarity">
    <text evidence="3">Belongs to the iron/manganese superoxide dismutase family.</text>
</comment>
<name>SODM2_STAAR</name>
<protein>
    <recommendedName>
        <fullName>Superoxide dismutase [Mn/Fe] 2</fullName>
        <ecNumber evidence="2">1.15.1.1</ecNumber>
    </recommendedName>
</protein>
<accession>Q6GKH2</accession>
<organism>
    <name type="scientific">Staphylococcus aureus (strain MRSA252)</name>
    <dbReference type="NCBI Taxonomy" id="282458"/>
    <lineage>
        <taxon>Bacteria</taxon>
        <taxon>Bacillati</taxon>
        <taxon>Bacillota</taxon>
        <taxon>Bacilli</taxon>
        <taxon>Bacillales</taxon>
        <taxon>Staphylococcaceae</taxon>
        <taxon>Staphylococcus</taxon>
    </lineage>
</organism>